<proteinExistence type="evidence at protein level"/>
<gene>
    <name evidence="1" type="primary">obg</name>
    <name type="ordered locus">NGO_1990</name>
</gene>
<dbReference type="EC" id="3.6.5.-" evidence="1 4"/>
<dbReference type="EMBL" id="AE004969">
    <property type="protein sequence ID" value="AAW90598.1"/>
    <property type="molecule type" value="Genomic_DNA"/>
</dbReference>
<dbReference type="RefSeq" id="YP_209010.1">
    <property type="nucleotide sequence ID" value="NC_002946.2"/>
</dbReference>
<dbReference type="SMR" id="Q5F5D9"/>
<dbReference type="STRING" id="242231.NGO_1990"/>
<dbReference type="KEGG" id="ngo:NGO_1990"/>
<dbReference type="PATRIC" id="fig|242231.10.peg.2401"/>
<dbReference type="HOGENOM" id="CLU_011747_2_0_4"/>
<dbReference type="Proteomes" id="UP000000535">
    <property type="component" value="Chromosome"/>
</dbReference>
<dbReference type="GO" id="GO:0005737">
    <property type="term" value="C:cytoplasm"/>
    <property type="evidence" value="ECO:0000314"/>
    <property type="project" value="UniProtKB"/>
</dbReference>
<dbReference type="GO" id="GO:0019003">
    <property type="term" value="F:GDP binding"/>
    <property type="evidence" value="ECO:0000314"/>
    <property type="project" value="UniProtKB"/>
</dbReference>
<dbReference type="GO" id="GO:0005525">
    <property type="term" value="F:GTP binding"/>
    <property type="evidence" value="ECO:0000314"/>
    <property type="project" value="UniProtKB"/>
</dbReference>
<dbReference type="GO" id="GO:0003924">
    <property type="term" value="F:GTPase activity"/>
    <property type="evidence" value="ECO:0000314"/>
    <property type="project" value="UniProtKB"/>
</dbReference>
<dbReference type="GO" id="GO:0000287">
    <property type="term" value="F:magnesium ion binding"/>
    <property type="evidence" value="ECO:0007669"/>
    <property type="project" value="InterPro"/>
</dbReference>
<dbReference type="GO" id="GO:0043022">
    <property type="term" value="F:ribosome binding"/>
    <property type="evidence" value="ECO:0000314"/>
    <property type="project" value="UniProtKB"/>
</dbReference>
<dbReference type="GO" id="GO:0042254">
    <property type="term" value="P:ribosome biogenesis"/>
    <property type="evidence" value="ECO:0007669"/>
    <property type="project" value="UniProtKB-UniRule"/>
</dbReference>
<dbReference type="CDD" id="cd01898">
    <property type="entry name" value="Obg"/>
    <property type="match status" value="1"/>
</dbReference>
<dbReference type="FunFam" id="2.70.210.12:FF:000001">
    <property type="entry name" value="GTPase Obg"/>
    <property type="match status" value="1"/>
</dbReference>
<dbReference type="FunFam" id="3.40.50.300:FF:000185">
    <property type="entry name" value="GTPase Obg"/>
    <property type="match status" value="1"/>
</dbReference>
<dbReference type="Gene3D" id="2.70.210.12">
    <property type="entry name" value="GTP1/OBG domain"/>
    <property type="match status" value="1"/>
</dbReference>
<dbReference type="Gene3D" id="3.40.50.300">
    <property type="entry name" value="P-loop containing nucleotide triphosphate hydrolases"/>
    <property type="match status" value="1"/>
</dbReference>
<dbReference type="HAMAP" id="MF_01454">
    <property type="entry name" value="GTPase_Obg"/>
    <property type="match status" value="1"/>
</dbReference>
<dbReference type="InterPro" id="IPR031167">
    <property type="entry name" value="G_OBG"/>
</dbReference>
<dbReference type="InterPro" id="IPR006073">
    <property type="entry name" value="GTP-bd"/>
</dbReference>
<dbReference type="InterPro" id="IPR014100">
    <property type="entry name" value="GTP-bd_Obg/CgtA"/>
</dbReference>
<dbReference type="InterPro" id="IPR006074">
    <property type="entry name" value="GTP1-OBG_CS"/>
</dbReference>
<dbReference type="InterPro" id="IPR006169">
    <property type="entry name" value="GTP1_OBG_dom"/>
</dbReference>
<dbReference type="InterPro" id="IPR036726">
    <property type="entry name" value="GTP1_OBG_dom_sf"/>
</dbReference>
<dbReference type="InterPro" id="IPR045086">
    <property type="entry name" value="OBG_GTPase"/>
</dbReference>
<dbReference type="InterPro" id="IPR027417">
    <property type="entry name" value="P-loop_NTPase"/>
</dbReference>
<dbReference type="NCBIfam" id="TIGR02729">
    <property type="entry name" value="Obg_CgtA"/>
    <property type="match status" value="1"/>
</dbReference>
<dbReference type="NCBIfam" id="NF008955">
    <property type="entry name" value="PRK12297.1"/>
    <property type="match status" value="1"/>
</dbReference>
<dbReference type="NCBIfam" id="NF008956">
    <property type="entry name" value="PRK12299.1"/>
    <property type="match status" value="1"/>
</dbReference>
<dbReference type="PANTHER" id="PTHR11702">
    <property type="entry name" value="DEVELOPMENTALLY REGULATED GTP-BINDING PROTEIN-RELATED"/>
    <property type="match status" value="1"/>
</dbReference>
<dbReference type="PANTHER" id="PTHR11702:SF31">
    <property type="entry name" value="MITOCHONDRIAL RIBOSOME-ASSOCIATED GTPASE 2"/>
    <property type="match status" value="1"/>
</dbReference>
<dbReference type="Pfam" id="PF01018">
    <property type="entry name" value="GTP1_OBG"/>
    <property type="match status" value="1"/>
</dbReference>
<dbReference type="Pfam" id="PF01926">
    <property type="entry name" value="MMR_HSR1"/>
    <property type="match status" value="1"/>
</dbReference>
<dbReference type="PIRSF" id="PIRSF002401">
    <property type="entry name" value="GTP_bd_Obg/CgtA"/>
    <property type="match status" value="1"/>
</dbReference>
<dbReference type="PRINTS" id="PR00326">
    <property type="entry name" value="GTP1OBG"/>
</dbReference>
<dbReference type="SUPFAM" id="SSF82051">
    <property type="entry name" value="Obg GTP-binding protein N-terminal domain"/>
    <property type="match status" value="1"/>
</dbReference>
<dbReference type="SUPFAM" id="SSF52540">
    <property type="entry name" value="P-loop containing nucleoside triphosphate hydrolases"/>
    <property type="match status" value="1"/>
</dbReference>
<dbReference type="PROSITE" id="PS51710">
    <property type="entry name" value="G_OBG"/>
    <property type="match status" value="1"/>
</dbReference>
<dbReference type="PROSITE" id="PS00905">
    <property type="entry name" value="GTP1_OBG"/>
    <property type="match status" value="1"/>
</dbReference>
<dbReference type="PROSITE" id="PS51883">
    <property type="entry name" value="OBG"/>
    <property type="match status" value="1"/>
</dbReference>
<accession>Q5F5D9</accession>
<keyword id="KW-0963">Cytoplasm</keyword>
<keyword id="KW-0342">GTP-binding</keyword>
<keyword id="KW-0378">Hydrolase</keyword>
<keyword id="KW-0460">Magnesium</keyword>
<keyword id="KW-0479">Metal-binding</keyword>
<keyword id="KW-0547">Nucleotide-binding</keyword>
<keyword id="KW-1185">Reference proteome</keyword>
<protein>
    <recommendedName>
        <fullName evidence="1">GTPase Obg</fullName>
        <ecNumber evidence="1 4">3.6.5.-</ecNumber>
    </recommendedName>
    <alternativeName>
        <fullName evidence="1">GTP-binding protein Obg</fullName>
    </alternativeName>
</protein>
<reference key="1">
    <citation type="submission" date="2003-03" db="EMBL/GenBank/DDBJ databases">
        <title>The complete genome sequence of Neisseria gonorrhoeae.</title>
        <authorList>
            <person name="Lewis L.A."/>
            <person name="Gillaspy A.F."/>
            <person name="McLaughlin R.E."/>
            <person name="Gipson M."/>
            <person name="Ducey T.F."/>
            <person name="Ownbey T."/>
            <person name="Hartman K."/>
            <person name="Nydick C."/>
            <person name="Carson M.B."/>
            <person name="Vaughn J."/>
            <person name="Thomson C."/>
            <person name="Song L."/>
            <person name="Lin S."/>
            <person name="Yuan X."/>
            <person name="Najar F."/>
            <person name="Zhan M."/>
            <person name="Ren Q."/>
            <person name="Zhu H."/>
            <person name="Qi S."/>
            <person name="Kenton S.M."/>
            <person name="Lai H."/>
            <person name="White J.D."/>
            <person name="Clifton S."/>
            <person name="Roe B.A."/>
            <person name="Dyer D.W."/>
        </authorList>
    </citation>
    <scope>NUCLEOTIDE SEQUENCE [LARGE SCALE GENOMIC DNA]</scope>
    <source>
        <strain>ATCC 700825 / FA 1090</strain>
    </source>
</reference>
<reference key="2">
    <citation type="journal article" date="2015" name="BMC Microbiol.">
        <title>The Neisseria gonorrhoeae Obg protein is an essential ribosome-associated GTPase and a potential drug target.</title>
        <authorList>
            <person name="Zielke R.A."/>
            <person name="Wierzbicki I.H."/>
            <person name="Baarda B.I."/>
            <person name="Sikora A.E."/>
        </authorList>
    </citation>
    <scope>FUNCTION</scope>
    <scope>COFACTOR</scope>
    <scope>SUBCELLULAR LOCATION</scope>
    <scope>INDUCTION</scope>
    <scope>DISRUPTION PHENOTYPE</scope>
    <scope>GTP-BINDING</scope>
    <scope>MUTAGENESIS OF 192-THR-THR-193</scope>
    <source>
        <strain>ATCC 700825 / FA 1090</strain>
    </source>
</reference>
<name>OBG_NEIG1</name>
<feature type="chain" id="PRO_0000386081" description="GTPase Obg">
    <location>
        <begin position="1"/>
        <end position="384"/>
    </location>
</feature>
<feature type="domain" description="Obg" evidence="2">
    <location>
        <begin position="1"/>
        <end position="159"/>
    </location>
</feature>
<feature type="domain" description="OBG-type G" evidence="1">
    <location>
        <begin position="160"/>
        <end position="348"/>
    </location>
</feature>
<feature type="region of interest" description="Disordered" evidence="3">
    <location>
        <begin position="20"/>
        <end position="46"/>
    </location>
</feature>
<feature type="region of interest" description="Disordered" evidence="3">
    <location>
        <begin position="129"/>
        <end position="149"/>
    </location>
</feature>
<feature type="compositionally biased region" description="Gly residues" evidence="3">
    <location>
        <begin position="33"/>
        <end position="43"/>
    </location>
</feature>
<feature type="compositionally biased region" description="Polar residues" evidence="3">
    <location>
        <begin position="130"/>
        <end position="143"/>
    </location>
</feature>
<feature type="binding site" evidence="1">
    <location>
        <begin position="166"/>
        <end position="173"/>
    </location>
    <ligand>
        <name>GTP</name>
        <dbReference type="ChEBI" id="CHEBI:37565"/>
    </ligand>
</feature>
<feature type="binding site" evidence="1">
    <location>
        <position position="173"/>
    </location>
    <ligand>
        <name>Mg(2+)</name>
        <dbReference type="ChEBI" id="CHEBI:18420"/>
    </ligand>
</feature>
<feature type="binding site" evidence="1">
    <location>
        <begin position="191"/>
        <end position="195"/>
    </location>
    <ligand>
        <name>GTP</name>
        <dbReference type="ChEBI" id="CHEBI:37565"/>
    </ligand>
</feature>
<feature type="binding site" evidence="1">
    <location>
        <position position="193"/>
    </location>
    <ligand>
        <name>Mg(2+)</name>
        <dbReference type="ChEBI" id="CHEBI:18420"/>
    </ligand>
</feature>
<feature type="binding site" evidence="1">
    <location>
        <begin position="213"/>
        <end position="216"/>
    </location>
    <ligand>
        <name>GTP</name>
        <dbReference type="ChEBI" id="CHEBI:37565"/>
    </ligand>
</feature>
<feature type="binding site" evidence="1">
    <location>
        <begin position="284"/>
        <end position="287"/>
    </location>
    <ligand>
        <name>GTP</name>
        <dbReference type="ChEBI" id="CHEBI:37565"/>
    </ligand>
</feature>
<feature type="binding site" evidence="1">
    <location>
        <begin position="329"/>
        <end position="331"/>
    </location>
    <ligand>
        <name>GTP</name>
        <dbReference type="ChEBI" id="CHEBI:37565"/>
    </ligand>
</feature>
<feature type="mutagenesis site" description="Loss of GTP-binding, binds GDP normally." evidence="4">
    <original>TT</original>
    <variation>AA</variation>
    <location>
        <begin position="192"/>
        <end position="193"/>
    </location>
</feature>
<organism>
    <name type="scientific">Neisseria gonorrhoeae (strain ATCC 700825 / FA 1090)</name>
    <dbReference type="NCBI Taxonomy" id="242231"/>
    <lineage>
        <taxon>Bacteria</taxon>
        <taxon>Pseudomonadati</taxon>
        <taxon>Pseudomonadota</taxon>
        <taxon>Betaproteobacteria</taxon>
        <taxon>Neisseriales</taxon>
        <taxon>Neisseriaceae</taxon>
        <taxon>Neisseria</taxon>
    </lineage>
</organism>
<evidence type="ECO:0000255" key="1">
    <source>
        <dbReference type="HAMAP-Rule" id="MF_01454"/>
    </source>
</evidence>
<evidence type="ECO:0000255" key="2">
    <source>
        <dbReference type="PROSITE-ProRule" id="PRU01231"/>
    </source>
</evidence>
<evidence type="ECO:0000256" key="3">
    <source>
        <dbReference type="SAM" id="MobiDB-lite"/>
    </source>
</evidence>
<evidence type="ECO:0000269" key="4">
    <source>
    </source>
</evidence>
<sequence>MKFIDEAKIEVAAGKGGNGATSFRREKFVPRGGPDGGDGGKGGSVWAEADENTNTLVEYRFVKRYQAKNGEKGHGSDRYGAGADDIVLKMPVGTLIRDLDTDEIVADLTYHGQRVCLAKGGKGGLGNIHFKSSVNRAPKQSTPGEEGETRSLQLELKVLADVGLLGMPNAGKSTLITAVSAARPKIANYPFTTLHPNLGVVRIDENHSFVMADIPGLIEGAAEGAGLGHRFLKHLSRTGLLLHVVDLAPFDETVNPAEEALAIINELRKYDEELYGKPRWLVLNKLDMLDEEEARARTAAFLEAVGWDYPEPDDRFQFDMETPRLFQISALTHQGTQELVHQINQYLAEKKRIEAEKAEAEKAAANVEIIEQQPKTDTGVFKPE</sequence>
<comment type="function">
    <text evidence="1 4">An essential GTPase which binds GTP, GDP and possibly (p)ppGpp with moderate affinity, with high nucleotide exchange rates and a fairly low GTP hydrolysis rate; the half-life of the GTP-bound state is about 50 minutes (PubMed:26122105). Plays a role in control of the cell cycle, stress response, ribosome biogenesis and in those bacteria that undergo differentiation, in morphogenesis control (By similarity).</text>
</comment>
<comment type="cofactor">
    <cofactor evidence="1 4">
        <name>Mg(2+)</name>
        <dbReference type="ChEBI" id="CHEBI:18420"/>
    </cofactor>
    <text evidence="4">Optimal binding to GTP occurs between 5-10 mM Mg(2+), binding to GDP is inhibited at &gt; 1 mM Mg(2+).</text>
</comment>
<comment type="subunit">
    <text evidence="1">Monomer.</text>
</comment>
<comment type="subcellular location">
    <subcellularLocation>
        <location evidence="1 4">Cytoplasm</location>
    </subcellularLocation>
    <text evidence="4">Associates with 50S ribosomal subunits. A small amount may associate with the cell inner membrane.</text>
</comment>
<comment type="induction">
    <text evidence="4">Expressed constitutively, reaches maximum expression in early log phase and remains constant until stationary phase. Similar levels are seen when cells are grown under iron-limiting conditions, anoxically or in the presence of human serum, which mimic clinical infections (at protein level).</text>
</comment>
<comment type="disruption phenotype">
    <text evidence="4">Essential, it cannot be deleted.</text>
</comment>
<comment type="similarity">
    <text evidence="1">Belongs to the TRAFAC class OBG-HflX-like GTPase superfamily. OBG GTPase family.</text>
</comment>